<evidence type="ECO:0000255" key="1">
    <source>
        <dbReference type="HAMAP-Rule" id="MF_01320"/>
    </source>
</evidence>
<evidence type="ECO:0000256" key="2">
    <source>
        <dbReference type="SAM" id="MobiDB-lite"/>
    </source>
</evidence>
<evidence type="ECO:0000305" key="3"/>
<proteinExistence type="inferred from homology"/>
<accession>A7IFY4</accession>
<comment type="function">
    <text evidence="1">One of the primary rRNA binding proteins. Required for association of the 30S and 50S subunits to form the 70S ribosome, for tRNA binding and peptide bond formation. It has been suggested to have peptidyltransferase activity; this is somewhat controversial. Makes several contacts with the 16S rRNA in the 70S ribosome.</text>
</comment>
<comment type="subunit">
    <text evidence="1">Part of the 50S ribosomal subunit. Forms a bridge to the 30S subunit in the 70S ribosome.</text>
</comment>
<comment type="similarity">
    <text evidence="1">Belongs to the universal ribosomal protein uL2 family.</text>
</comment>
<dbReference type="EMBL" id="CP000781">
    <property type="protein sequence ID" value="ABS66927.1"/>
    <property type="molecule type" value="Genomic_DNA"/>
</dbReference>
<dbReference type="SMR" id="A7IFY4"/>
<dbReference type="STRING" id="78245.Xaut_1682"/>
<dbReference type="KEGG" id="xau:Xaut_1682"/>
<dbReference type="eggNOG" id="COG0090">
    <property type="taxonomic scope" value="Bacteria"/>
</dbReference>
<dbReference type="HOGENOM" id="CLU_036235_2_1_5"/>
<dbReference type="OrthoDB" id="9778722at2"/>
<dbReference type="PhylomeDB" id="A7IFY4"/>
<dbReference type="Proteomes" id="UP000002417">
    <property type="component" value="Chromosome"/>
</dbReference>
<dbReference type="GO" id="GO:0015934">
    <property type="term" value="C:large ribosomal subunit"/>
    <property type="evidence" value="ECO:0007669"/>
    <property type="project" value="InterPro"/>
</dbReference>
<dbReference type="GO" id="GO:0019843">
    <property type="term" value="F:rRNA binding"/>
    <property type="evidence" value="ECO:0007669"/>
    <property type="project" value="UniProtKB-UniRule"/>
</dbReference>
<dbReference type="GO" id="GO:0003735">
    <property type="term" value="F:structural constituent of ribosome"/>
    <property type="evidence" value="ECO:0007669"/>
    <property type="project" value="InterPro"/>
</dbReference>
<dbReference type="GO" id="GO:0016740">
    <property type="term" value="F:transferase activity"/>
    <property type="evidence" value="ECO:0007669"/>
    <property type="project" value="InterPro"/>
</dbReference>
<dbReference type="GO" id="GO:0002181">
    <property type="term" value="P:cytoplasmic translation"/>
    <property type="evidence" value="ECO:0007669"/>
    <property type="project" value="TreeGrafter"/>
</dbReference>
<dbReference type="FunFam" id="2.30.30.30:FF:000055">
    <property type="entry name" value="50S ribosomal protein L2"/>
    <property type="match status" value="1"/>
</dbReference>
<dbReference type="FunFam" id="2.40.50.140:FF:000003">
    <property type="entry name" value="50S ribosomal protein L2"/>
    <property type="match status" value="1"/>
</dbReference>
<dbReference type="FunFam" id="4.10.950.10:FF:000001">
    <property type="entry name" value="50S ribosomal protein L2"/>
    <property type="match status" value="1"/>
</dbReference>
<dbReference type="Gene3D" id="2.30.30.30">
    <property type="match status" value="1"/>
</dbReference>
<dbReference type="Gene3D" id="2.40.50.140">
    <property type="entry name" value="Nucleic acid-binding proteins"/>
    <property type="match status" value="1"/>
</dbReference>
<dbReference type="Gene3D" id="4.10.950.10">
    <property type="entry name" value="Ribosomal protein L2, domain 3"/>
    <property type="match status" value="1"/>
</dbReference>
<dbReference type="HAMAP" id="MF_01320_B">
    <property type="entry name" value="Ribosomal_uL2_B"/>
    <property type="match status" value="1"/>
</dbReference>
<dbReference type="InterPro" id="IPR012340">
    <property type="entry name" value="NA-bd_OB-fold"/>
</dbReference>
<dbReference type="InterPro" id="IPR014722">
    <property type="entry name" value="Rib_uL2_dom2"/>
</dbReference>
<dbReference type="InterPro" id="IPR002171">
    <property type="entry name" value="Ribosomal_uL2"/>
</dbReference>
<dbReference type="InterPro" id="IPR005880">
    <property type="entry name" value="Ribosomal_uL2_bac/org-type"/>
</dbReference>
<dbReference type="InterPro" id="IPR022669">
    <property type="entry name" value="Ribosomal_uL2_C"/>
</dbReference>
<dbReference type="InterPro" id="IPR022671">
    <property type="entry name" value="Ribosomal_uL2_CS"/>
</dbReference>
<dbReference type="InterPro" id="IPR014726">
    <property type="entry name" value="Ribosomal_uL2_dom3"/>
</dbReference>
<dbReference type="InterPro" id="IPR022666">
    <property type="entry name" value="Ribosomal_uL2_RNA-bd_dom"/>
</dbReference>
<dbReference type="InterPro" id="IPR008991">
    <property type="entry name" value="Translation_prot_SH3-like_sf"/>
</dbReference>
<dbReference type="NCBIfam" id="TIGR01171">
    <property type="entry name" value="rplB_bact"/>
    <property type="match status" value="1"/>
</dbReference>
<dbReference type="PANTHER" id="PTHR13691:SF5">
    <property type="entry name" value="LARGE RIBOSOMAL SUBUNIT PROTEIN UL2M"/>
    <property type="match status" value="1"/>
</dbReference>
<dbReference type="PANTHER" id="PTHR13691">
    <property type="entry name" value="RIBOSOMAL PROTEIN L2"/>
    <property type="match status" value="1"/>
</dbReference>
<dbReference type="Pfam" id="PF00181">
    <property type="entry name" value="Ribosomal_L2"/>
    <property type="match status" value="1"/>
</dbReference>
<dbReference type="Pfam" id="PF03947">
    <property type="entry name" value="Ribosomal_L2_C"/>
    <property type="match status" value="1"/>
</dbReference>
<dbReference type="PIRSF" id="PIRSF002158">
    <property type="entry name" value="Ribosomal_L2"/>
    <property type="match status" value="1"/>
</dbReference>
<dbReference type="SMART" id="SM01383">
    <property type="entry name" value="Ribosomal_L2"/>
    <property type="match status" value="1"/>
</dbReference>
<dbReference type="SMART" id="SM01382">
    <property type="entry name" value="Ribosomal_L2_C"/>
    <property type="match status" value="1"/>
</dbReference>
<dbReference type="SUPFAM" id="SSF50249">
    <property type="entry name" value="Nucleic acid-binding proteins"/>
    <property type="match status" value="1"/>
</dbReference>
<dbReference type="SUPFAM" id="SSF50104">
    <property type="entry name" value="Translation proteins SH3-like domain"/>
    <property type="match status" value="1"/>
</dbReference>
<dbReference type="PROSITE" id="PS00467">
    <property type="entry name" value="RIBOSOMAL_L2"/>
    <property type="match status" value="1"/>
</dbReference>
<gene>
    <name evidence="1" type="primary">rplB</name>
    <name type="ordered locus">Xaut_1682</name>
</gene>
<name>RL2_XANP2</name>
<sequence length="277" mass="30055">MALKHFKPVTPSLRQLVIVDRSGLYKGKPVKTLTEGKSSSGGRNNNGRITVRFRGGGHKQTYRLVDFKRTKRGVPAVVDRIEYDPNRSAFIALIKYEDGDLAYILAPQRLAVGDQVIAGEQVDVKPGNAGPLSSLPVGTIVHNVELKVGKGGQIARSAGTYAQIVGRDQGYVIVRLNSGEQRLVLGACYATVGAVSNPDHMNISLGKAGRNRWLGRKPHNRGVTMNPVDHPHGGGEGRTSGGRNPVTPWGFPTKGKKTRNNKATDKFIVSSRHKRKK</sequence>
<organism>
    <name type="scientific">Xanthobacter autotrophicus (strain ATCC BAA-1158 / Py2)</name>
    <dbReference type="NCBI Taxonomy" id="78245"/>
    <lineage>
        <taxon>Bacteria</taxon>
        <taxon>Pseudomonadati</taxon>
        <taxon>Pseudomonadota</taxon>
        <taxon>Alphaproteobacteria</taxon>
        <taxon>Hyphomicrobiales</taxon>
        <taxon>Xanthobacteraceae</taxon>
        <taxon>Xanthobacter</taxon>
    </lineage>
</organism>
<reference key="1">
    <citation type="submission" date="2007-07" db="EMBL/GenBank/DDBJ databases">
        <title>Complete sequence of chromosome of Xanthobacter autotrophicus Py2.</title>
        <authorList>
            <consortium name="US DOE Joint Genome Institute"/>
            <person name="Copeland A."/>
            <person name="Lucas S."/>
            <person name="Lapidus A."/>
            <person name="Barry K."/>
            <person name="Glavina del Rio T."/>
            <person name="Hammon N."/>
            <person name="Israni S."/>
            <person name="Dalin E."/>
            <person name="Tice H."/>
            <person name="Pitluck S."/>
            <person name="Sims D."/>
            <person name="Brettin T."/>
            <person name="Bruce D."/>
            <person name="Detter J.C."/>
            <person name="Han C."/>
            <person name="Tapia R."/>
            <person name="Brainard J."/>
            <person name="Schmutz J."/>
            <person name="Larimer F."/>
            <person name="Land M."/>
            <person name="Hauser L."/>
            <person name="Kyrpides N."/>
            <person name="Kim E."/>
            <person name="Ensigns S.A."/>
            <person name="Richardson P."/>
        </authorList>
    </citation>
    <scope>NUCLEOTIDE SEQUENCE [LARGE SCALE GENOMIC DNA]</scope>
    <source>
        <strain>ATCC BAA-1158 / Py2</strain>
    </source>
</reference>
<protein>
    <recommendedName>
        <fullName evidence="1">Large ribosomal subunit protein uL2</fullName>
    </recommendedName>
    <alternativeName>
        <fullName evidence="3">50S ribosomal protein L2</fullName>
    </alternativeName>
</protein>
<keyword id="KW-1185">Reference proteome</keyword>
<keyword id="KW-0687">Ribonucleoprotein</keyword>
<keyword id="KW-0689">Ribosomal protein</keyword>
<keyword id="KW-0694">RNA-binding</keyword>
<keyword id="KW-0699">rRNA-binding</keyword>
<feature type="chain" id="PRO_1000141641" description="Large ribosomal subunit protein uL2">
    <location>
        <begin position="1"/>
        <end position="277"/>
    </location>
</feature>
<feature type="region of interest" description="Disordered" evidence="2">
    <location>
        <begin position="222"/>
        <end position="277"/>
    </location>
</feature>